<organism>
    <name type="scientific">Polynucleobacter necessarius subsp. necessarius (strain STIR1)</name>
    <dbReference type="NCBI Taxonomy" id="452638"/>
    <lineage>
        <taxon>Bacteria</taxon>
        <taxon>Pseudomonadati</taxon>
        <taxon>Pseudomonadota</taxon>
        <taxon>Betaproteobacteria</taxon>
        <taxon>Burkholderiales</taxon>
        <taxon>Burkholderiaceae</taxon>
        <taxon>Polynucleobacter</taxon>
    </lineage>
</organism>
<accession>B1XSI4</accession>
<comment type="function">
    <text evidence="1">Catalyzes the transfer of a ribosyl phosphate group from 5-phosphoribose 1-diphosphate to orotate, leading to the formation of orotidine monophosphate (OMP).</text>
</comment>
<comment type="catalytic activity">
    <reaction evidence="1">
        <text>orotidine 5'-phosphate + diphosphate = orotate + 5-phospho-alpha-D-ribose 1-diphosphate</text>
        <dbReference type="Rhea" id="RHEA:10380"/>
        <dbReference type="ChEBI" id="CHEBI:30839"/>
        <dbReference type="ChEBI" id="CHEBI:33019"/>
        <dbReference type="ChEBI" id="CHEBI:57538"/>
        <dbReference type="ChEBI" id="CHEBI:58017"/>
        <dbReference type="EC" id="2.4.2.10"/>
    </reaction>
</comment>
<comment type="cofactor">
    <cofactor evidence="1">
        <name>Mg(2+)</name>
        <dbReference type="ChEBI" id="CHEBI:18420"/>
    </cofactor>
</comment>
<comment type="pathway">
    <text evidence="1">Pyrimidine metabolism; UMP biosynthesis via de novo pathway; UMP from orotate: step 1/2.</text>
</comment>
<comment type="subunit">
    <text evidence="1">Homodimer.</text>
</comment>
<comment type="similarity">
    <text evidence="1">Belongs to the purine/pyrimidine phosphoribosyltransferase family. PyrE subfamily.</text>
</comment>
<sequence length="222" mass="23670">MSSNNSNQDNFIRFALEAKVLSFGEFKTKAGRLSPYFFNAGEFNDGAHLSALGRYYSKALQESKLQFDMLYGPAYKGITLAAATAIALVDDGINVPYAYNRKEAKDHGEGGVLVGASVKGRVVIIDDVISAGTSVGESVDLIRKAGAEPAAVLIALDRMERSGNAVDIGDKSAVQAVEQEFGLPVISIANLAGLMSFLTASSDTQLTNYLPAVKAYREKYGI</sequence>
<feature type="chain" id="PRO_1000138812" description="Orotate phosphoribosyltransferase">
    <location>
        <begin position="1"/>
        <end position="222"/>
    </location>
</feature>
<feature type="binding site" description="in other chain" evidence="1">
    <location>
        <position position="29"/>
    </location>
    <ligand>
        <name>5-phospho-alpha-D-ribose 1-diphosphate</name>
        <dbReference type="ChEBI" id="CHEBI:58017"/>
        <note>ligand shared between dimeric partners</note>
    </ligand>
</feature>
<feature type="binding site" evidence="1">
    <location>
        <begin position="37"/>
        <end position="38"/>
    </location>
    <ligand>
        <name>orotate</name>
        <dbReference type="ChEBI" id="CHEBI:30839"/>
    </ligand>
</feature>
<feature type="binding site" description="in other chain" evidence="1">
    <location>
        <begin position="75"/>
        <end position="76"/>
    </location>
    <ligand>
        <name>5-phospho-alpha-D-ribose 1-diphosphate</name>
        <dbReference type="ChEBI" id="CHEBI:58017"/>
        <note>ligand shared between dimeric partners</note>
    </ligand>
</feature>
<feature type="binding site" evidence="1">
    <location>
        <position position="101"/>
    </location>
    <ligand>
        <name>5-phospho-alpha-D-ribose 1-diphosphate</name>
        <dbReference type="ChEBI" id="CHEBI:58017"/>
        <note>ligand shared between dimeric partners</note>
    </ligand>
</feature>
<feature type="binding site" description="in other chain" evidence="1">
    <location>
        <position position="102"/>
    </location>
    <ligand>
        <name>5-phospho-alpha-D-ribose 1-diphosphate</name>
        <dbReference type="ChEBI" id="CHEBI:58017"/>
        <note>ligand shared between dimeric partners</note>
    </ligand>
</feature>
<feature type="binding site" evidence="1">
    <location>
        <position position="105"/>
    </location>
    <ligand>
        <name>5-phospho-alpha-D-ribose 1-diphosphate</name>
        <dbReference type="ChEBI" id="CHEBI:58017"/>
        <note>ligand shared between dimeric partners</note>
    </ligand>
</feature>
<feature type="binding site" evidence="1">
    <location>
        <position position="107"/>
    </location>
    <ligand>
        <name>5-phospho-alpha-D-ribose 1-diphosphate</name>
        <dbReference type="ChEBI" id="CHEBI:58017"/>
        <note>ligand shared between dimeric partners</note>
    </ligand>
</feature>
<feature type="binding site" description="in other chain" evidence="1">
    <location>
        <begin position="126"/>
        <end position="134"/>
    </location>
    <ligand>
        <name>5-phospho-alpha-D-ribose 1-diphosphate</name>
        <dbReference type="ChEBI" id="CHEBI:58017"/>
        <note>ligand shared between dimeric partners</note>
    </ligand>
</feature>
<feature type="binding site" evidence="1">
    <location>
        <position position="130"/>
    </location>
    <ligand>
        <name>orotate</name>
        <dbReference type="ChEBI" id="CHEBI:30839"/>
    </ligand>
</feature>
<feature type="binding site" evidence="1">
    <location>
        <position position="158"/>
    </location>
    <ligand>
        <name>orotate</name>
        <dbReference type="ChEBI" id="CHEBI:30839"/>
    </ligand>
</feature>
<keyword id="KW-0328">Glycosyltransferase</keyword>
<keyword id="KW-0460">Magnesium</keyword>
<keyword id="KW-0665">Pyrimidine biosynthesis</keyword>
<keyword id="KW-0808">Transferase</keyword>
<gene>
    <name evidence="1" type="primary">pyrE</name>
    <name type="ordered locus">Pnec_1724</name>
</gene>
<reference key="1">
    <citation type="journal article" date="2013" name="Proc. Natl. Acad. Sci. U.S.A.">
        <title>Polynucleobacter necessarius, a model for genome reduction in both free-living and symbiotic bacteria.</title>
        <authorList>
            <person name="Boscaro V."/>
            <person name="Felletti M."/>
            <person name="Vannini C."/>
            <person name="Ackerman M.S."/>
            <person name="Chain P.S."/>
            <person name="Malfatti S."/>
            <person name="Vergez L.M."/>
            <person name="Shin M."/>
            <person name="Doak T.G."/>
            <person name="Lynch M."/>
            <person name="Petroni G."/>
        </authorList>
    </citation>
    <scope>NUCLEOTIDE SEQUENCE [LARGE SCALE GENOMIC DNA]</scope>
    <source>
        <strain>STIR1</strain>
    </source>
</reference>
<proteinExistence type="inferred from homology"/>
<dbReference type="EC" id="2.4.2.10" evidence="1"/>
<dbReference type="EMBL" id="CP001010">
    <property type="protein sequence ID" value="ACB44783.1"/>
    <property type="molecule type" value="Genomic_DNA"/>
</dbReference>
<dbReference type="SMR" id="B1XSI4"/>
<dbReference type="STRING" id="452638.Pnec_1724"/>
<dbReference type="KEGG" id="pne:Pnec_1724"/>
<dbReference type="eggNOG" id="COG0461">
    <property type="taxonomic scope" value="Bacteria"/>
</dbReference>
<dbReference type="HOGENOM" id="CLU_074878_0_1_4"/>
<dbReference type="OrthoDB" id="9779060at2"/>
<dbReference type="UniPathway" id="UPA00070">
    <property type="reaction ID" value="UER00119"/>
</dbReference>
<dbReference type="GO" id="GO:0005737">
    <property type="term" value="C:cytoplasm"/>
    <property type="evidence" value="ECO:0007669"/>
    <property type="project" value="TreeGrafter"/>
</dbReference>
<dbReference type="GO" id="GO:0000287">
    <property type="term" value="F:magnesium ion binding"/>
    <property type="evidence" value="ECO:0007669"/>
    <property type="project" value="UniProtKB-UniRule"/>
</dbReference>
<dbReference type="GO" id="GO:0004588">
    <property type="term" value="F:orotate phosphoribosyltransferase activity"/>
    <property type="evidence" value="ECO:0007669"/>
    <property type="project" value="UniProtKB-UniRule"/>
</dbReference>
<dbReference type="GO" id="GO:0006207">
    <property type="term" value="P:'de novo' pyrimidine nucleobase biosynthetic process"/>
    <property type="evidence" value="ECO:0007669"/>
    <property type="project" value="TreeGrafter"/>
</dbReference>
<dbReference type="GO" id="GO:0044205">
    <property type="term" value="P:'de novo' UMP biosynthetic process"/>
    <property type="evidence" value="ECO:0007669"/>
    <property type="project" value="UniProtKB-UniRule"/>
</dbReference>
<dbReference type="GO" id="GO:0046132">
    <property type="term" value="P:pyrimidine ribonucleoside biosynthetic process"/>
    <property type="evidence" value="ECO:0007669"/>
    <property type="project" value="TreeGrafter"/>
</dbReference>
<dbReference type="CDD" id="cd06223">
    <property type="entry name" value="PRTases_typeI"/>
    <property type="match status" value="1"/>
</dbReference>
<dbReference type="FunFam" id="3.40.50.2020:FF:000008">
    <property type="entry name" value="Orotate phosphoribosyltransferase"/>
    <property type="match status" value="1"/>
</dbReference>
<dbReference type="Gene3D" id="3.40.50.2020">
    <property type="match status" value="1"/>
</dbReference>
<dbReference type="HAMAP" id="MF_01208">
    <property type="entry name" value="PyrE"/>
    <property type="match status" value="1"/>
</dbReference>
<dbReference type="InterPro" id="IPR023031">
    <property type="entry name" value="OPRT"/>
</dbReference>
<dbReference type="InterPro" id="IPR004467">
    <property type="entry name" value="Or_phspho_trans_dom"/>
</dbReference>
<dbReference type="InterPro" id="IPR000836">
    <property type="entry name" value="PRibTrfase_dom"/>
</dbReference>
<dbReference type="InterPro" id="IPR029057">
    <property type="entry name" value="PRTase-like"/>
</dbReference>
<dbReference type="NCBIfam" id="TIGR00336">
    <property type="entry name" value="pyrE"/>
    <property type="match status" value="1"/>
</dbReference>
<dbReference type="PANTHER" id="PTHR46683">
    <property type="entry name" value="OROTATE PHOSPHORIBOSYLTRANSFERASE 1-RELATED"/>
    <property type="match status" value="1"/>
</dbReference>
<dbReference type="PANTHER" id="PTHR46683:SF1">
    <property type="entry name" value="OROTATE PHOSPHORIBOSYLTRANSFERASE 1-RELATED"/>
    <property type="match status" value="1"/>
</dbReference>
<dbReference type="Pfam" id="PF00156">
    <property type="entry name" value="Pribosyltran"/>
    <property type="match status" value="1"/>
</dbReference>
<dbReference type="SUPFAM" id="SSF53271">
    <property type="entry name" value="PRTase-like"/>
    <property type="match status" value="1"/>
</dbReference>
<dbReference type="PROSITE" id="PS00103">
    <property type="entry name" value="PUR_PYR_PR_TRANSFER"/>
    <property type="match status" value="1"/>
</dbReference>
<evidence type="ECO:0000255" key="1">
    <source>
        <dbReference type="HAMAP-Rule" id="MF_01208"/>
    </source>
</evidence>
<protein>
    <recommendedName>
        <fullName evidence="1">Orotate phosphoribosyltransferase</fullName>
        <shortName evidence="1">OPRT</shortName>
        <shortName evidence="1">OPRTase</shortName>
        <ecNumber evidence="1">2.4.2.10</ecNumber>
    </recommendedName>
</protein>
<name>PYRE_POLNS</name>